<gene>
    <name evidence="1" type="primary">argC</name>
    <name type="ordered locus">ckrop_0836</name>
</gene>
<keyword id="KW-0028">Amino-acid biosynthesis</keyword>
<keyword id="KW-0055">Arginine biosynthesis</keyword>
<keyword id="KW-0963">Cytoplasm</keyword>
<keyword id="KW-0521">NADP</keyword>
<keyword id="KW-0560">Oxidoreductase</keyword>
<keyword id="KW-1185">Reference proteome</keyword>
<organism>
    <name type="scientific">Corynebacterium kroppenstedtii (strain DSM 44385 / JCM 11950 / CIP 105744 / CCUG 35717)</name>
    <dbReference type="NCBI Taxonomy" id="645127"/>
    <lineage>
        <taxon>Bacteria</taxon>
        <taxon>Bacillati</taxon>
        <taxon>Actinomycetota</taxon>
        <taxon>Actinomycetes</taxon>
        <taxon>Mycobacteriales</taxon>
        <taxon>Corynebacteriaceae</taxon>
        <taxon>Corynebacterium</taxon>
    </lineage>
</organism>
<proteinExistence type="inferred from homology"/>
<protein>
    <recommendedName>
        <fullName evidence="1">N-acetyl-gamma-glutamyl-phosphate reductase</fullName>
        <shortName evidence="1">AGPR</shortName>
        <ecNumber evidence="1">1.2.1.38</ecNumber>
    </recommendedName>
    <alternativeName>
        <fullName evidence="1">N-acetyl-glutamate semialdehyde dehydrogenase</fullName>
        <shortName evidence="1">NAGSA dehydrogenase</shortName>
    </alternativeName>
</protein>
<feature type="chain" id="PRO_1000203401" description="N-acetyl-gamma-glutamyl-phosphate reductase">
    <location>
        <begin position="1"/>
        <end position="357"/>
    </location>
</feature>
<feature type="active site" evidence="1">
    <location>
        <position position="151"/>
    </location>
</feature>
<evidence type="ECO:0000255" key="1">
    <source>
        <dbReference type="HAMAP-Rule" id="MF_00150"/>
    </source>
</evidence>
<accession>C4LID5</accession>
<dbReference type="EC" id="1.2.1.38" evidence="1"/>
<dbReference type="EMBL" id="CP001620">
    <property type="protein sequence ID" value="ACR17590.1"/>
    <property type="molecule type" value="Genomic_DNA"/>
</dbReference>
<dbReference type="RefSeq" id="WP_012731477.1">
    <property type="nucleotide sequence ID" value="NC_012704.1"/>
</dbReference>
<dbReference type="SMR" id="C4LID5"/>
<dbReference type="STRING" id="645127.ckrop_0836"/>
<dbReference type="KEGG" id="ckp:ckrop_0836"/>
<dbReference type="eggNOG" id="COG0002">
    <property type="taxonomic scope" value="Bacteria"/>
</dbReference>
<dbReference type="HOGENOM" id="CLU_006384_0_0_11"/>
<dbReference type="OrthoDB" id="9801289at2"/>
<dbReference type="UniPathway" id="UPA00068">
    <property type="reaction ID" value="UER00108"/>
</dbReference>
<dbReference type="Proteomes" id="UP000001473">
    <property type="component" value="Chromosome"/>
</dbReference>
<dbReference type="GO" id="GO:0005737">
    <property type="term" value="C:cytoplasm"/>
    <property type="evidence" value="ECO:0007669"/>
    <property type="project" value="UniProtKB-SubCell"/>
</dbReference>
<dbReference type="GO" id="GO:0003942">
    <property type="term" value="F:N-acetyl-gamma-glutamyl-phosphate reductase activity"/>
    <property type="evidence" value="ECO:0007669"/>
    <property type="project" value="UniProtKB-UniRule"/>
</dbReference>
<dbReference type="GO" id="GO:0051287">
    <property type="term" value="F:NAD binding"/>
    <property type="evidence" value="ECO:0007669"/>
    <property type="project" value="InterPro"/>
</dbReference>
<dbReference type="GO" id="GO:0070401">
    <property type="term" value="F:NADP+ binding"/>
    <property type="evidence" value="ECO:0007669"/>
    <property type="project" value="InterPro"/>
</dbReference>
<dbReference type="GO" id="GO:0006526">
    <property type="term" value="P:L-arginine biosynthetic process"/>
    <property type="evidence" value="ECO:0007669"/>
    <property type="project" value="UniProtKB-UniRule"/>
</dbReference>
<dbReference type="CDD" id="cd24148">
    <property type="entry name" value="AGPR_1_actinobacAGPR_like"/>
    <property type="match status" value="1"/>
</dbReference>
<dbReference type="CDD" id="cd23934">
    <property type="entry name" value="AGPR_1_C"/>
    <property type="match status" value="1"/>
</dbReference>
<dbReference type="Gene3D" id="3.30.360.10">
    <property type="entry name" value="Dihydrodipicolinate Reductase, domain 2"/>
    <property type="match status" value="1"/>
</dbReference>
<dbReference type="Gene3D" id="3.40.50.720">
    <property type="entry name" value="NAD(P)-binding Rossmann-like Domain"/>
    <property type="match status" value="1"/>
</dbReference>
<dbReference type="HAMAP" id="MF_00150">
    <property type="entry name" value="ArgC_type1"/>
    <property type="match status" value="1"/>
</dbReference>
<dbReference type="InterPro" id="IPR023013">
    <property type="entry name" value="AGPR_AS"/>
</dbReference>
<dbReference type="InterPro" id="IPR000706">
    <property type="entry name" value="AGPR_type-1"/>
</dbReference>
<dbReference type="InterPro" id="IPR036291">
    <property type="entry name" value="NAD(P)-bd_dom_sf"/>
</dbReference>
<dbReference type="InterPro" id="IPR050085">
    <property type="entry name" value="NAGSA_dehydrogenase"/>
</dbReference>
<dbReference type="InterPro" id="IPR000534">
    <property type="entry name" value="Semialdehyde_DH_NAD-bd"/>
</dbReference>
<dbReference type="NCBIfam" id="TIGR01850">
    <property type="entry name" value="argC"/>
    <property type="match status" value="1"/>
</dbReference>
<dbReference type="PANTHER" id="PTHR32338:SF10">
    <property type="entry name" value="N-ACETYL-GAMMA-GLUTAMYL-PHOSPHATE REDUCTASE, CHLOROPLASTIC-RELATED"/>
    <property type="match status" value="1"/>
</dbReference>
<dbReference type="PANTHER" id="PTHR32338">
    <property type="entry name" value="N-ACETYL-GAMMA-GLUTAMYL-PHOSPHATE REDUCTASE, CHLOROPLASTIC-RELATED-RELATED"/>
    <property type="match status" value="1"/>
</dbReference>
<dbReference type="Pfam" id="PF01118">
    <property type="entry name" value="Semialdhyde_dh"/>
    <property type="match status" value="1"/>
</dbReference>
<dbReference type="Pfam" id="PF22698">
    <property type="entry name" value="Semialdhyde_dhC_1"/>
    <property type="match status" value="1"/>
</dbReference>
<dbReference type="SMART" id="SM00859">
    <property type="entry name" value="Semialdhyde_dh"/>
    <property type="match status" value="1"/>
</dbReference>
<dbReference type="SUPFAM" id="SSF55347">
    <property type="entry name" value="Glyceraldehyde-3-phosphate dehydrogenase-like, C-terminal domain"/>
    <property type="match status" value="1"/>
</dbReference>
<dbReference type="SUPFAM" id="SSF51735">
    <property type="entry name" value="NAD(P)-binding Rossmann-fold domains"/>
    <property type="match status" value="1"/>
</dbReference>
<dbReference type="PROSITE" id="PS01224">
    <property type="entry name" value="ARGC"/>
    <property type="match status" value="1"/>
</dbReference>
<sequence length="357" mass="37482">MTVSVAVAGATGYAGSEILRLLLSHPQYRAGAMTIGALTGASHAGQSVEALMPHLVELHGRTIEKTEPARLAEHDIVFLALPHGHSAKIAQSLPDETLIIDCGADFRLADKEQWEAFYDSPYAGSWPYGIPEMPGHRKKIASTRRIAVPGCFPTGATLAVLPALTSKLITPEISIVSVTGVSGAGKKPSVGMLGSETMGSARAYKAGGKHRHTPEIIQNLQEACDEPVQVSFTPVLAPMQRGILTTASAPASDELVALTEKDPSAAQDAVKAAYRSFYSDEKFVVVLNGDQQPATQSVLGSNAVHIQAEYDVAARRVVVTSAIDNLVKGTAGAAIQCMNLAQGWPEDSGLSINGVAP</sequence>
<reference key="1">
    <citation type="journal article" date="2008" name="J. Biotechnol.">
        <title>Ultrafast pyrosequencing of Corynebacterium kroppenstedtii DSM44385 revealed insights into the physiology of a lipophilic corynebacterium that lacks mycolic acids.</title>
        <authorList>
            <person name="Tauch A."/>
            <person name="Schneider J."/>
            <person name="Szczepanowski R."/>
            <person name="Tilker A."/>
            <person name="Viehoever P."/>
            <person name="Gartemann K.-H."/>
            <person name="Arnold W."/>
            <person name="Blom J."/>
            <person name="Brinkrolf K."/>
            <person name="Brune I."/>
            <person name="Goetker S."/>
            <person name="Weisshaar B."/>
            <person name="Goesmann A."/>
            <person name="Droege M."/>
            <person name="Puehler A."/>
        </authorList>
    </citation>
    <scope>NUCLEOTIDE SEQUENCE [LARGE SCALE GENOMIC DNA]</scope>
    <source>
        <strain>DSM 44385 / JCM 11950 / CIP 105744 / CCUG 35717</strain>
    </source>
</reference>
<name>ARGC_CORK4</name>
<comment type="function">
    <text evidence="1">Catalyzes the NADPH-dependent reduction of N-acetyl-5-glutamyl phosphate to yield N-acetyl-L-glutamate 5-semialdehyde.</text>
</comment>
<comment type="catalytic activity">
    <reaction evidence="1">
        <text>N-acetyl-L-glutamate 5-semialdehyde + phosphate + NADP(+) = N-acetyl-L-glutamyl 5-phosphate + NADPH + H(+)</text>
        <dbReference type="Rhea" id="RHEA:21588"/>
        <dbReference type="ChEBI" id="CHEBI:15378"/>
        <dbReference type="ChEBI" id="CHEBI:29123"/>
        <dbReference type="ChEBI" id="CHEBI:43474"/>
        <dbReference type="ChEBI" id="CHEBI:57783"/>
        <dbReference type="ChEBI" id="CHEBI:57936"/>
        <dbReference type="ChEBI" id="CHEBI:58349"/>
        <dbReference type="EC" id="1.2.1.38"/>
    </reaction>
</comment>
<comment type="pathway">
    <text evidence="1">Amino-acid biosynthesis; L-arginine biosynthesis; N(2)-acetyl-L-ornithine from L-glutamate: step 3/4.</text>
</comment>
<comment type="subcellular location">
    <subcellularLocation>
        <location evidence="1">Cytoplasm</location>
    </subcellularLocation>
</comment>
<comment type="similarity">
    <text evidence="1">Belongs to the NAGSA dehydrogenase family. Type 1 subfamily.</text>
</comment>